<evidence type="ECO:0000250" key="1">
    <source>
        <dbReference type="UniProtKB" id="Q52LJ0"/>
    </source>
</evidence>
<evidence type="ECO:0000256" key="2">
    <source>
        <dbReference type="SAM" id="MobiDB-lite"/>
    </source>
</evidence>
<evidence type="ECO:0000305" key="3"/>
<gene>
    <name type="primary">Fam98b</name>
</gene>
<sequence>MRGPELGPETSMEGDVLDTLEALGYKGPLLEEQALSKAAEGGLSSPEFSELCIWLGSQIKSLCNLEESITSAGRDDLESFQLEISGFLKEMACPYSVLVSGDIKERLTKKDDCLKLLLFLSTELQALQILQKKKHKNSQLDKNSEICQEVQAVCDALGVPKSDTSDIPLLLSQVESKVKDILCRVQKNHVGKPLLKVDLSSEQAEKLERINDALSCEYECRRRMLMKRLDVTVQSFGWSDRAKAKTDNIARIYQPKRYALSPKTTVTLAHLLAAREDLSKIIRTSSGISREKTACAINKVLMGRVPDRGGRPNEIEPPPPEMPPWQKRQEGGGRGGWGGGGGGRGGGGGGRGGWGGGGGWGGGGGSGGGWGGSGGGGGGRGGFQGRGDYGGRGDYGGRGGYGGRGGYGGRGYGDPYGGGGGGGGGYRRY</sequence>
<dbReference type="EMBL" id="AL928959">
    <property type="status" value="NOT_ANNOTATED_CDS"/>
    <property type="molecule type" value="Genomic_DNA"/>
</dbReference>
<dbReference type="EMBL" id="BC048087">
    <property type="protein sequence ID" value="AAH48087.1"/>
    <property type="molecule type" value="mRNA"/>
</dbReference>
<dbReference type="EMBL" id="AK019190">
    <property type="protein sequence ID" value="BAB31594.1"/>
    <property type="molecule type" value="mRNA"/>
</dbReference>
<dbReference type="EMBL" id="AK019253">
    <property type="protein sequence ID" value="BAB31629.1"/>
    <property type="molecule type" value="mRNA"/>
</dbReference>
<dbReference type="CCDS" id="CCDS16571.1"/>
<dbReference type="RefSeq" id="NP_080896.2">
    <property type="nucleotide sequence ID" value="NM_026620.3"/>
</dbReference>
<dbReference type="SMR" id="Q80VD1"/>
<dbReference type="BioGRID" id="212735">
    <property type="interactions" value="12"/>
</dbReference>
<dbReference type="FunCoup" id="Q80VD1">
    <property type="interactions" value="5070"/>
</dbReference>
<dbReference type="IntAct" id="Q80VD1">
    <property type="interactions" value="2"/>
</dbReference>
<dbReference type="STRING" id="10090.ENSMUSP00000028825"/>
<dbReference type="GlyGen" id="Q80VD1">
    <property type="glycosylation" value="1 site, 1 O-linked glycan (1 site)"/>
</dbReference>
<dbReference type="iPTMnet" id="Q80VD1"/>
<dbReference type="PhosphoSitePlus" id="Q80VD1"/>
<dbReference type="SwissPalm" id="Q80VD1"/>
<dbReference type="jPOST" id="Q80VD1"/>
<dbReference type="PaxDb" id="10090-ENSMUSP00000028825"/>
<dbReference type="PeptideAtlas" id="Q80VD1"/>
<dbReference type="ProteomicsDB" id="267701"/>
<dbReference type="Pumba" id="Q80VD1"/>
<dbReference type="Antibodypedia" id="2032">
    <property type="antibodies" value="107 antibodies from 21 providers"/>
</dbReference>
<dbReference type="DNASU" id="68215"/>
<dbReference type="Ensembl" id="ENSMUST00000028825.5">
    <property type="protein sequence ID" value="ENSMUSP00000028825.5"/>
    <property type="gene ID" value="ENSMUSG00000027349.6"/>
</dbReference>
<dbReference type="GeneID" id="68215"/>
<dbReference type="KEGG" id="mmu:68215"/>
<dbReference type="UCSC" id="uc008lrk.1">
    <property type="organism name" value="mouse"/>
</dbReference>
<dbReference type="AGR" id="MGI:1915465"/>
<dbReference type="CTD" id="283742"/>
<dbReference type="MGI" id="MGI:1915465">
    <property type="gene designation" value="Fam98b"/>
</dbReference>
<dbReference type="VEuPathDB" id="HostDB:ENSMUSG00000027349"/>
<dbReference type="eggNOG" id="KOG3973">
    <property type="taxonomic scope" value="Eukaryota"/>
</dbReference>
<dbReference type="GeneTree" id="ENSGT00440000037341"/>
<dbReference type="HOGENOM" id="CLU_038408_1_0_1"/>
<dbReference type="InParanoid" id="Q80VD1"/>
<dbReference type="OMA" id="QQWISGS"/>
<dbReference type="OrthoDB" id="512356at2759"/>
<dbReference type="PhylomeDB" id="Q80VD1"/>
<dbReference type="TreeFam" id="TF320308"/>
<dbReference type="BioGRID-ORCS" id="68215">
    <property type="hits" value="12 hits in 78 CRISPR screens"/>
</dbReference>
<dbReference type="PRO" id="PR:Q80VD1"/>
<dbReference type="Proteomes" id="UP000000589">
    <property type="component" value="Chromosome 2"/>
</dbReference>
<dbReference type="RNAct" id="Q80VD1">
    <property type="molecule type" value="protein"/>
</dbReference>
<dbReference type="Bgee" id="ENSMUSG00000027349">
    <property type="expression patterns" value="Expressed in manus and 219 other cell types or tissues"/>
</dbReference>
<dbReference type="GO" id="GO:0005737">
    <property type="term" value="C:cytoplasm"/>
    <property type="evidence" value="ECO:0000250"/>
    <property type="project" value="UniProtKB"/>
</dbReference>
<dbReference type="GO" id="GO:0005654">
    <property type="term" value="C:nucleoplasm"/>
    <property type="evidence" value="ECO:0007669"/>
    <property type="project" value="Ensembl"/>
</dbReference>
<dbReference type="GO" id="GO:0005634">
    <property type="term" value="C:nucleus"/>
    <property type="evidence" value="ECO:0000250"/>
    <property type="project" value="UniProtKB"/>
</dbReference>
<dbReference type="GO" id="GO:0072669">
    <property type="term" value="C:tRNA-splicing ligase complex"/>
    <property type="evidence" value="ECO:0000250"/>
    <property type="project" value="UniProtKB"/>
</dbReference>
<dbReference type="GO" id="GO:0042802">
    <property type="term" value="F:identical protein binding"/>
    <property type="evidence" value="ECO:0000250"/>
    <property type="project" value="UniProtKB"/>
</dbReference>
<dbReference type="GO" id="GO:0008276">
    <property type="term" value="F:protein methyltransferase activity"/>
    <property type="evidence" value="ECO:0000250"/>
    <property type="project" value="UniProtKB"/>
</dbReference>
<dbReference type="GO" id="GO:0008284">
    <property type="term" value="P:positive regulation of cell population proliferation"/>
    <property type="evidence" value="ECO:0000250"/>
    <property type="project" value="UniProtKB"/>
</dbReference>
<dbReference type="GO" id="GO:0010628">
    <property type="term" value="P:positive regulation of gene expression"/>
    <property type="evidence" value="ECO:0000250"/>
    <property type="project" value="UniProtKB"/>
</dbReference>
<dbReference type="GO" id="GO:0006479">
    <property type="term" value="P:protein methylation"/>
    <property type="evidence" value="ECO:0000250"/>
    <property type="project" value="UniProtKB"/>
</dbReference>
<dbReference type="InterPro" id="IPR018797">
    <property type="entry name" value="FAM98"/>
</dbReference>
<dbReference type="PANTHER" id="PTHR31353">
    <property type="entry name" value="FAM98"/>
    <property type="match status" value="1"/>
</dbReference>
<dbReference type="PANTHER" id="PTHR31353:SF11">
    <property type="entry name" value="PROTEIN FAM98B"/>
    <property type="match status" value="1"/>
</dbReference>
<dbReference type="Pfam" id="PF10239">
    <property type="entry name" value="DUF2465"/>
    <property type="match status" value="1"/>
</dbReference>
<dbReference type="PRINTS" id="PR01228">
    <property type="entry name" value="EGGSHELL"/>
</dbReference>
<organism>
    <name type="scientific">Mus musculus</name>
    <name type="common">Mouse</name>
    <dbReference type="NCBI Taxonomy" id="10090"/>
    <lineage>
        <taxon>Eukaryota</taxon>
        <taxon>Metazoa</taxon>
        <taxon>Chordata</taxon>
        <taxon>Craniata</taxon>
        <taxon>Vertebrata</taxon>
        <taxon>Euteleostomi</taxon>
        <taxon>Mammalia</taxon>
        <taxon>Eutheria</taxon>
        <taxon>Euarchontoglires</taxon>
        <taxon>Glires</taxon>
        <taxon>Rodentia</taxon>
        <taxon>Myomorpha</taxon>
        <taxon>Muroidea</taxon>
        <taxon>Muridae</taxon>
        <taxon>Murinae</taxon>
        <taxon>Mus</taxon>
        <taxon>Mus</taxon>
    </lineage>
</organism>
<proteinExistence type="evidence at protein level"/>
<comment type="function">
    <text evidence="1">Positively stimulates PRMT1-induced protein arginine dimethylated arginine methylation.</text>
</comment>
<comment type="subunit">
    <text evidence="1">Homodimer. Component of a tRNA-splicing ligase complex. Interacts with FAM98A.</text>
</comment>
<comment type="subcellular location">
    <subcellularLocation>
        <location evidence="1">Nucleus</location>
    </subcellularLocation>
    <subcellularLocation>
        <location evidence="1">Cytoplasm</location>
    </subcellularLocation>
</comment>
<comment type="similarity">
    <text evidence="3">Belongs to the FAM98 family.</text>
</comment>
<reference key="1">
    <citation type="journal article" date="2009" name="PLoS Biol.">
        <title>Lineage-specific biology revealed by a finished genome assembly of the mouse.</title>
        <authorList>
            <person name="Church D.M."/>
            <person name="Goodstadt L."/>
            <person name="Hillier L.W."/>
            <person name="Zody M.C."/>
            <person name="Goldstein S."/>
            <person name="She X."/>
            <person name="Bult C.J."/>
            <person name="Agarwala R."/>
            <person name="Cherry J.L."/>
            <person name="DiCuccio M."/>
            <person name="Hlavina W."/>
            <person name="Kapustin Y."/>
            <person name="Meric P."/>
            <person name="Maglott D."/>
            <person name="Birtle Z."/>
            <person name="Marques A.C."/>
            <person name="Graves T."/>
            <person name="Zhou S."/>
            <person name="Teague B."/>
            <person name="Potamousis K."/>
            <person name="Churas C."/>
            <person name="Place M."/>
            <person name="Herschleb J."/>
            <person name="Runnheim R."/>
            <person name="Forrest D."/>
            <person name="Amos-Landgraf J."/>
            <person name="Schwartz D.C."/>
            <person name="Cheng Z."/>
            <person name="Lindblad-Toh K."/>
            <person name="Eichler E.E."/>
            <person name="Ponting C.P."/>
        </authorList>
    </citation>
    <scope>NUCLEOTIDE SEQUENCE [LARGE SCALE GENOMIC DNA]</scope>
    <source>
        <strain>C57BL/6J</strain>
    </source>
</reference>
<reference key="2">
    <citation type="journal article" date="2004" name="Genome Res.">
        <title>The status, quality, and expansion of the NIH full-length cDNA project: the Mammalian Gene Collection (MGC).</title>
        <authorList>
            <consortium name="The MGC Project Team"/>
        </authorList>
    </citation>
    <scope>NUCLEOTIDE SEQUENCE [LARGE SCALE MRNA]</scope>
    <source>
        <strain>FVB/N-3</strain>
        <tissue>Mammary tumor</tissue>
    </source>
</reference>
<reference key="3">
    <citation type="journal article" date="2005" name="Science">
        <title>The transcriptional landscape of the mammalian genome.</title>
        <authorList>
            <person name="Carninci P."/>
            <person name="Kasukawa T."/>
            <person name="Katayama S."/>
            <person name="Gough J."/>
            <person name="Frith M.C."/>
            <person name="Maeda N."/>
            <person name="Oyama R."/>
            <person name="Ravasi T."/>
            <person name="Lenhard B."/>
            <person name="Wells C."/>
            <person name="Kodzius R."/>
            <person name="Shimokawa K."/>
            <person name="Bajic V.B."/>
            <person name="Brenner S.E."/>
            <person name="Batalov S."/>
            <person name="Forrest A.R."/>
            <person name="Zavolan M."/>
            <person name="Davis M.J."/>
            <person name="Wilming L.G."/>
            <person name="Aidinis V."/>
            <person name="Allen J.E."/>
            <person name="Ambesi-Impiombato A."/>
            <person name="Apweiler R."/>
            <person name="Aturaliya R.N."/>
            <person name="Bailey T.L."/>
            <person name="Bansal M."/>
            <person name="Baxter L."/>
            <person name="Beisel K.W."/>
            <person name="Bersano T."/>
            <person name="Bono H."/>
            <person name="Chalk A.M."/>
            <person name="Chiu K.P."/>
            <person name="Choudhary V."/>
            <person name="Christoffels A."/>
            <person name="Clutterbuck D.R."/>
            <person name="Crowe M.L."/>
            <person name="Dalla E."/>
            <person name="Dalrymple B.P."/>
            <person name="de Bono B."/>
            <person name="Della Gatta G."/>
            <person name="di Bernardo D."/>
            <person name="Down T."/>
            <person name="Engstrom P."/>
            <person name="Fagiolini M."/>
            <person name="Faulkner G."/>
            <person name="Fletcher C.F."/>
            <person name="Fukushima T."/>
            <person name="Furuno M."/>
            <person name="Futaki S."/>
            <person name="Gariboldi M."/>
            <person name="Georgii-Hemming P."/>
            <person name="Gingeras T.R."/>
            <person name="Gojobori T."/>
            <person name="Green R.E."/>
            <person name="Gustincich S."/>
            <person name="Harbers M."/>
            <person name="Hayashi Y."/>
            <person name="Hensch T.K."/>
            <person name="Hirokawa N."/>
            <person name="Hill D."/>
            <person name="Huminiecki L."/>
            <person name="Iacono M."/>
            <person name="Ikeo K."/>
            <person name="Iwama A."/>
            <person name="Ishikawa T."/>
            <person name="Jakt M."/>
            <person name="Kanapin A."/>
            <person name="Katoh M."/>
            <person name="Kawasawa Y."/>
            <person name="Kelso J."/>
            <person name="Kitamura H."/>
            <person name="Kitano H."/>
            <person name="Kollias G."/>
            <person name="Krishnan S.P."/>
            <person name="Kruger A."/>
            <person name="Kummerfeld S.K."/>
            <person name="Kurochkin I.V."/>
            <person name="Lareau L.F."/>
            <person name="Lazarevic D."/>
            <person name="Lipovich L."/>
            <person name="Liu J."/>
            <person name="Liuni S."/>
            <person name="McWilliam S."/>
            <person name="Madan Babu M."/>
            <person name="Madera M."/>
            <person name="Marchionni L."/>
            <person name="Matsuda H."/>
            <person name="Matsuzawa S."/>
            <person name="Miki H."/>
            <person name="Mignone F."/>
            <person name="Miyake S."/>
            <person name="Morris K."/>
            <person name="Mottagui-Tabar S."/>
            <person name="Mulder N."/>
            <person name="Nakano N."/>
            <person name="Nakauchi H."/>
            <person name="Ng P."/>
            <person name="Nilsson R."/>
            <person name="Nishiguchi S."/>
            <person name="Nishikawa S."/>
            <person name="Nori F."/>
            <person name="Ohara O."/>
            <person name="Okazaki Y."/>
            <person name="Orlando V."/>
            <person name="Pang K.C."/>
            <person name="Pavan W.J."/>
            <person name="Pavesi G."/>
            <person name="Pesole G."/>
            <person name="Petrovsky N."/>
            <person name="Piazza S."/>
            <person name="Reed J."/>
            <person name="Reid J.F."/>
            <person name="Ring B.Z."/>
            <person name="Ringwald M."/>
            <person name="Rost B."/>
            <person name="Ruan Y."/>
            <person name="Salzberg S.L."/>
            <person name="Sandelin A."/>
            <person name="Schneider C."/>
            <person name="Schoenbach C."/>
            <person name="Sekiguchi K."/>
            <person name="Semple C.A."/>
            <person name="Seno S."/>
            <person name="Sessa L."/>
            <person name="Sheng Y."/>
            <person name="Shibata Y."/>
            <person name="Shimada H."/>
            <person name="Shimada K."/>
            <person name="Silva D."/>
            <person name="Sinclair B."/>
            <person name="Sperling S."/>
            <person name="Stupka E."/>
            <person name="Sugiura K."/>
            <person name="Sultana R."/>
            <person name="Takenaka Y."/>
            <person name="Taki K."/>
            <person name="Tammoja K."/>
            <person name="Tan S.L."/>
            <person name="Tang S."/>
            <person name="Taylor M.S."/>
            <person name="Tegner J."/>
            <person name="Teichmann S.A."/>
            <person name="Ueda H.R."/>
            <person name="van Nimwegen E."/>
            <person name="Verardo R."/>
            <person name="Wei C.L."/>
            <person name="Yagi K."/>
            <person name="Yamanishi H."/>
            <person name="Zabarovsky E."/>
            <person name="Zhu S."/>
            <person name="Zimmer A."/>
            <person name="Hide W."/>
            <person name="Bult C."/>
            <person name="Grimmond S.M."/>
            <person name="Teasdale R.D."/>
            <person name="Liu E.T."/>
            <person name="Brusic V."/>
            <person name="Quackenbush J."/>
            <person name="Wahlestedt C."/>
            <person name="Mattick J.S."/>
            <person name="Hume D.A."/>
            <person name="Kai C."/>
            <person name="Sasaki D."/>
            <person name="Tomaru Y."/>
            <person name="Fukuda S."/>
            <person name="Kanamori-Katayama M."/>
            <person name="Suzuki M."/>
            <person name="Aoki J."/>
            <person name="Arakawa T."/>
            <person name="Iida J."/>
            <person name="Imamura K."/>
            <person name="Itoh M."/>
            <person name="Kato T."/>
            <person name="Kawaji H."/>
            <person name="Kawagashira N."/>
            <person name="Kawashima T."/>
            <person name="Kojima M."/>
            <person name="Kondo S."/>
            <person name="Konno H."/>
            <person name="Nakano K."/>
            <person name="Ninomiya N."/>
            <person name="Nishio T."/>
            <person name="Okada M."/>
            <person name="Plessy C."/>
            <person name="Shibata K."/>
            <person name="Shiraki T."/>
            <person name="Suzuki S."/>
            <person name="Tagami M."/>
            <person name="Waki K."/>
            <person name="Watahiki A."/>
            <person name="Okamura-Oho Y."/>
            <person name="Suzuki H."/>
            <person name="Kawai J."/>
            <person name="Hayashizaki Y."/>
        </authorList>
    </citation>
    <scope>NUCLEOTIDE SEQUENCE [LARGE SCALE MRNA] OF 1-129</scope>
    <source>
        <strain>C57BL/6J</strain>
    </source>
</reference>
<reference key="4">
    <citation type="journal article" date="2010" name="Cell">
        <title>A tissue-specific atlas of mouse protein phosphorylation and expression.</title>
        <authorList>
            <person name="Huttlin E.L."/>
            <person name="Jedrychowski M.P."/>
            <person name="Elias J.E."/>
            <person name="Goswami T."/>
            <person name="Rad R."/>
            <person name="Beausoleil S.A."/>
            <person name="Villen J."/>
            <person name="Haas W."/>
            <person name="Sowa M.E."/>
            <person name="Gygi S.P."/>
        </authorList>
    </citation>
    <scope>IDENTIFICATION BY MASS SPECTROMETRY [LARGE SCALE ANALYSIS]</scope>
    <source>
        <tissue>Brain</tissue>
        <tissue>Kidney</tissue>
        <tissue>Liver</tissue>
        <tissue>Lung</tissue>
        <tissue>Pancreas</tissue>
        <tissue>Spleen</tissue>
        <tissue>Testis</tissue>
    </source>
</reference>
<feature type="chain" id="PRO_0000187189" description="Protein FAM98B">
    <location>
        <begin position="1"/>
        <end position="429"/>
    </location>
</feature>
<feature type="region of interest" description="Disordered" evidence="2">
    <location>
        <begin position="304"/>
        <end position="429"/>
    </location>
</feature>
<feature type="compositionally biased region" description="Basic and acidic residues" evidence="2">
    <location>
        <begin position="305"/>
        <end position="314"/>
    </location>
</feature>
<feature type="compositionally biased region" description="Gly residues" evidence="2">
    <location>
        <begin position="332"/>
        <end position="429"/>
    </location>
</feature>
<protein>
    <recommendedName>
        <fullName>Protein FAM98B</fullName>
    </recommendedName>
</protein>
<keyword id="KW-0963">Cytoplasm</keyword>
<keyword id="KW-0539">Nucleus</keyword>
<keyword id="KW-1185">Reference proteome</keyword>
<name>FA98B_MOUSE</name>
<accession>Q80VD1</accession>
<accession>A2ATZ4</accession>
<accession>Q9CS28</accession>
<accession>Q9CS37</accession>